<dbReference type="EC" id="4.3.3.6" evidence="1"/>
<dbReference type="EC" id="3.5.1.2" evidence="1"/>
<dbReference type="EMBL" id="CP001186">
    <property type="protein sequence ID" value="ACK94235.1"/>
    <property type="molecule type" value="Genomic_DNA"/>
</dbReference>
<dbReference type="RefSeq" id="WP_000238785.1">
    <property type="nucleotide sequence ID" value="NC_011772.1"/>
</dbReference>
<dbReference type="SMR" id="B7IS30"/>
<dbReference type="MEROPS" id="C26.A32"/>
<dbReference type="GeneID" id="72446810"/>
<dbReference type="KEGG" id="bcg:BCG9842_B5303"/>
<dbReference type="HOGENOM" id="CLU_069674_2_0_9"/>
<dbReference type="UniPathway" id="UPA00245"/>
<dbReference type="Proteomes" id="UP000006744">
    <property type="component" value="Chromosome"/>
</dbReference>
<dbReference type="GO" id="GO:0005829">
    <property type="term" value="C:cytosol"/>
    <property type="evidence" value="ECO:0007669"/>
    <property type="project" value="TreeGrafter"/>
</dbReference>
<dbReference type="GO" id="GO:1903600">
    <property type="term" value="C:glutaminase complex"/>
    <property type="evidence" value="ECO:0007669"/>
    <property type="project" value="TreeGrafter"/>
</dbReference>
<dbReference type="GO" id="GO:0004359">
    <property type="term" value="F:glutaminase activity"/>
    <property type="evidence" value="ECO:0007669"/>
    <property type="project" value="UniProtKB-UniRule"/>
</dbReference>
<dbReference type="GO" id="GO:0036381">
    <property type="term" value="F:pyridoxal 5'-phosphate synthase (glutamine hydrolysing) activity"/>
    <property type="evidence" value="ECO:0007669"/>
    <property type="project" value="UniProtKB-UniRule"/>
</dbReference>
<dbReference type="GO" id="GO:0006543">
    <property type="term" value="P:glutamine catabolic process"/>
    <property type="evidence" value="ECO:0007669"/>
    <property type="project" value="UniProtKB-UniRule"/>
</dbReference>
<dbReference type="GO" id="GO:0042823">
    <property type="term" value="P:pyridoxal phosphate biosynthetic process"/>
    <property type="evidence" value="ECO:0007669"/>
    <property type="project" value="UniProtKB-UniRule"/>
</dbReference>
<dbReference type="GO" id="GO:0008614">
    <property type="term" value="P:pyridoxine metabolic process"/>
    <property type="evidence" value="ECO:0007669"/>
    <property type="project" value="TreeGrafter"/>
</dbReference>
<dbReference type="CDD" id="cd01749">
    <property type="entry name" value="GATase1_PB"/>
    <property type="match status" value="1"/>
</dbReference>
<dbReference type="FunFam" id="3.40.50.880:FF:000010">
    <property type="entry name" value="uncharacterized protein LOC100176842 isoform X2"/>
    <property type="match status" value="1"/>
</dbReference>
<dbReference type="Gene3D" id="3.40.50.880">
    <property type="match status" value="1"/>
</dbReference>
<dbReference type="HAMAP" id="MF_01615">
    <property type="entry name" value="PdxT"/>
    <property type="match status" value="1"/>
</dbReference>
<dbReference type="InterPro" id="IPR029062">
    <property type="entry name" value="Class_I_gatase-like"/>
</dbReference>
<dbReference type="InterPro" id="IPR002161">
    <property type="entry name" value="PdxT/SNO"/>
</dbReference>
<dbReference type="InterPro" id="IPR021196">
    <property type="entry name" value="PdxT/SNO_CS"/>
</dbReference>
<dbReference type="NCBIfam" id="TIGR03800">
    <property type="entry name" value="PLP_synth_Pdx2"/>
    <property type="match status" value="1"/>
</dbReference>
<dbReference type="PANTHER" id="PTHR31559">
    <property type="entry name" value="PYRIDOXAL 5'-PHOSPHATE SYNTHASE SUBUNIT SNO"/>
    <property type="match status" value="1"/>
</dbReference>
<dbReference type="PANTHER" id="PTHR31559:SF0">
    <property type="entry name" value="PYRIDOXAL 5'-PHOSPHATE SYNTHASE SUBUNIT SNO1-RELATED"/>
    <property type="match status" value="1"/>
</dbReference>
<dbReference type="Pfam" id="PF01174">
    <property type="entry name" value="SNO"/>
    <property type="match status" value="1"/>
</dbReference>
<dbReference type="PIRSF" id="PIRSF005639">
    <property type="entry name" value="Glut_amidoT_SNO"/>
    <property type="match status" value="1"/>
</dbReference>
<dbReference type="SUPFAM" id="SSF52317">
    <property type="entry name" value="Class I glutamine amidotransferase-like"/>
    <property type="match status" value="1"/>
</dbReference>
<dbReference type="PROSITE" id="PS01236">
    <property type="entry name" value="PDXT_SNO_1"/>
    <property type="match status" value="1"/>
</dbReference>
<dbReference type="PROSITE" id="PS51130">
    <property type="entry name" value="PDXT_SNO_2"/>
    <property type="match status" value="1"/>
</dbReference>
<evidence type="ECO:0000255" key="1">
    <source>
        <dbReference type="HAMAP-Rule" id="MF_01615"/>
    </source>
</evidence>
<feature type="chain" id="PRO_1000185873" description="Pyridoxal 5'-phosphate synthase subunit PdxT">
    <location>
        <begin position="1"/>
        <end position="196"/>
    </location>
</feature>
<feature type="active site" description="Nucleophile" evidence="1">
    <location>
        <position position="79"/>
    </location>
</feature>
<feature type="active site" description="Charge relay system" evidence="1">
    <location>
        <position position="170"/>
    </location>
</feature>
<feature type="active site" description="Charge relay system" evidence="1">
    <location>
        <position position="172"/>
    </location>
</feature>
<feature type="binding site" evidence="1">
    <location>
        <begin position="47"/>
        <end position="49"/>
    </location>
    <ligand>
        <name>L-glutamine</name>
        <dbReference type="ChEBI" id="CHEBI:58359"/>
    </ligand>
</feature>
<feature type="binding site" evidence="1">
    <location>
        <position position="106"/>
    </location>
    <ligand>
        <name>L-glutamine</name>
        <dbReference type="ChEBI" id="CHEBI:58359"/>
    </ligand>
</feature>
<feature type="binding site" evidence="1">
    <location>
        <begin position="134"/>
        <end position="135"/>
    </location>
    <ligand>
        <name>L-glutamine</name>
        <dbReference type="ChEBI" id="CHEBI:58359"/>
    </ligand>
</feature>
<keyword id="KW-0315">Glutamine amidotransferase</keyword>
<keyword id="KW-0378">Hydrolase</keyword>
<keyword id="KW-0456">Lyase</keyword>
<keyword id="KW-0663">Pyridoxal phosphate</keyword>
<name>PDXT_BACC2</name>
<proteinExistence type="inferred from homology"/>
<gene>
    <name evidence="1" type="primary">pdxT</name>
    <name type="ordered locus">BCG9842_B5303</name>
</gene>
<sequence length="196" mass="21560">MVKIGVLGLQGAVREHVKSVEASGAEAVVVKRIEQLEEIDGLILPGGESTTMRRLIDKYAFMEPLRTFAKSGKPMFGTCAGMILLAKTLIGYEEAHIGAMDITVERNAFGRQKDSFEAALSIEGVGEDFVGVFIRAPYVVEVADNVEVLSKHGDRMVAVRQDQFLAASFHPELTDDHRVTAYFVEMVKEAKMKKVV</sequence>
<organism>
    <name type="scientific">Bacillus cereus (strain G9842)</name>
    <dbReference type="NCBI Taxonomy" id="405531"/>
    <lineage>
        <taxon>Bacteria</taxon>
        <taxon>Bacillati</taxon>
        <taxon>Bacillota</taxon>
        <taxon>Bacilli</taxon>
        <taxon>Bacillales</taxon>
        <taxon>Bacillaceae</taxon>
        <taxon>Bacillus</taxon>
        <taxon>Bacillus cereus group</taxon>
    </lineage>
</organism>
<comment type="function">
    <text evidence="1">Catalyzes the hydrolysis of glutamine to glutamate and ammonia as part of the biosynthesis of pyridoxal 5'-phosphate. The resulting ammonia molecule is channeled to the active site of PdxS.</text>
</comment>
<comment type="catalytic activity">
    <reaction evidence="1">
        <text>aldehydo-D-ribose 5-phosphate + D-glyceraldehyde 3-phosphate + L-glutamine = pyridoxal 5'-phosphate + L-glutamate + phosphate + 3 H2O + H(+)</text>
        <dbReference type="Rhea" id="RHEA:31507"/>
        <dbReference type="ChEBI" id="CHEBI:15377"/>
        <dbReference type="ChEBI" id="CHEBI:15378"/>
        <dbReference type="ChEBI" id="CHEBI:29985"/>
        <dbReference type="ChEBI" id="CHEBI:43474"/>
        <dbReference type="ChEBI" id="CHEBI:58273"/>
        <dbReference type="ChEBI" id="CHEBI:58359"/>
        <dbReference type="ChEBI" id="CHEBI:59776"/>
        <dbReference type="ChEBI" id="CHEBI:597326"/>
        <dbReference type="EC" id="4.3.3.6"/>
    </reaction>
</comment>
<comment type="catalytic activity">
    <reaction evidence="1">
        <text>L-glutamine + H2O = L-glutamate + NH4(+)</text>
        <dbReference type="Rhea" id="RHEA:15889"/>
        <dbReference type="ChEBI" id="CHEBI:15377"/>
        <dbReference type="ChEBI" id="CHEBI:28938"/>
        <dbReference type="ChEBI" id="CHEBI:29985"/>
        <dbReference type="ChEBI" id="CHEBI:58359"/>
        <dbReference type="EC" id="3.5.1.2"/>
    </reaction>
</comment>
<comment type="pathway">
    <text evidence="1">Cofactor biosynthesis; pyridoxal 5'-phosphate biosynthesis.</text>
</comment>
<comment type="subunit">
    <text evidence="1">In the presence of PdxS, forms a dodecamer of heterodimers. Only shows activity in the heterodimer.</text>
</comment>
<comment type="similarity">
    <text evidence="1">Belongs to the glutaminase PdxT/SNO family.</text>
</comment>
<accession>B7IS30</accession>
<reference key="1">
    <citation type="submission" date="2008-10" db="EMBL/GenBank/DDBJ databases">
        <title>Genome sequence of Bacillus cereus G9842.</title>
        <authorList>
            <person name="Dodson R.J."/>
            <person name="Durkin A.S."/>
            <person name="Rosovitz M.J."/>
            <person name="Rasko D.A."/>
            <person name="Hoffmaster A."/>
            <person name="Ravel J."/>
            <person name="Sutton G."/>
        </authorList>
    </citation>
    <scope>NUCLEOTIDE SEQUENCE [LARGE SCALE GENOMIC DNA]</scope>
    <source>
        <strain>G9842</strain>
    </source>
</reference>
<protein>
    <recommendedName>
        <fullName evidence="1">Pyridoxal 5'-phosphate synthase subunit PdxT</fullName>
        <ecNumber evidence="1">4.3.3.6</ecNumber>
    </recommendedName>
    <alternativeName>
        <fullName evidence="1">Pdx2</fullName>
    </alternativeName>
    <alternativeName>
        <fullName evidence="1">Pyridoxal 5'-phosphate synthase glutaminase subunit</fullName>
        <ecNumber evidence="1">3.5.1.2</ecNumber>
    </alternativeName>
</protein>